<proteinExistence type="evidence at protein level"/>
<reference key="1">
    <citation type="journal article" date="1996" name="Yeast">
        <title>Sequencing of a 35.71 kb DNA segment on the right arm of yeast chromosome XV reveals regions of similarity to chromosomes I and XIII.</title>
        <authorList>
            <person name="Pearson B.M."/>
            <person name="Hernando Y."/>
            <person name="Payne J."/>
            <person name="Wolf S.S."/>
            <person name="Kalogeropoulos A."/>
            <person name="Schweizer M."/>
        </authorList>
    </citation>
    <scope>NUCLEOTIDE SEQUENCE [GENOMIC DNA]</scope>
    <source>
        <strain>ATCC 96604 / S288c / FY1679</strain>
    </source>
</reference>
<reference key="2">
    <citation type="journal article" date="1998" name="J. Biol. Chem.">
        <title>Nop5p is a small nucleolar ribonucleoprotein component required for pre-18S rRNA processing in yeast.</title>
        <authorList>
            <person name="Wu P."/>
            <person name="Brockenbrough J.S."/>
            <person name="Metcalfe A.C."/>
            <person name="Chen S."/>
            <person name="Aris J.P."/>
        </authorList>
    </citation>
    <scope>NUCLEOTIDE SEQUENCE [GENOMIC DNA]</scope>
    <scope>FUNCTION</scope>
    <scope>SUBCELLULAR LOCATION</scope>
    <source>
        <strain>ATCC 200060 / W303</strain>
    </source>
</reference>
<reference key="3">
    <citation type="journal article" date="1997" name="Nature">
        <title>The nucleotide sequence of Saccharomyces cerevisiae chromosome XV.</title>
        <authorList>
            <person name="Dujon B."/>
            <person name="Albermann K."/>
            <person name="Aldea M."/>
            <person name="Alexandraki D."/>
            <person name="Ansorge W."/>
            <person name="Arino J."/>
            <person name="Benes V."/>
            <person name="Bohn C."/>
            <person name="Bolotin-Fukuhara M."/>
            <person name="Bordonne R."/>
            <person name="Boyer J."/>
            <person name="Camasses A."/>
            <person name="Casamayor A."/>
            <person name="Casas C."/>
            <person name="Cheret G."/>
            <person name="Cziepluch C."/>
            <person name="Daignan-Fornier B."/>
            <person name="Dang V.-D."/>
            <person name="de Haan M."/>
            <person name="Delius H."/>
            <person name="Durand P."/>
            <person name="Fairhead C."/>
            <person name="Feldmann H."/>
            <person name="Gaillon L."/>
            <person name="Galisson F."/>
            <person name="Gamo F.-J."/>
            <person name="Gancedo C."/>
            <person name="Goffeau A."/>
            <person name="Goulding S.E."/>
            <person name="Grivell L.A."/>
            <person name="Habbig B."/>
            <person name="Hand N.J."/>
            <person name="Hani J."/>
            <person name="Hattenhorst U."/>
            <person name="Hebling U."/>
            <person name="Hernando Y."/>
            <person name="Herrero E."/>
            <person name="Heumann K."/>
            <person name="Hiesel R."/>
            <person name="Hilger F."/>
            <person name="Hofmann B."/>
            <person name="Hollenberg C.P."/>
            <person name="Hughes B."/>
            <person name="Jauniaux J.-C."/>
            <person name="Kalogeropoulos A."/>
            <person name="Katsoulou C."/>
            <person name="Kordes E."/>
            <person name="Lafuente M.J."/>
            <person name="Landt O."/>
            <person name="Louis E.J."/>
            <person name="Maarse A.C."/>
            <person name="Madania A."/>
            <person name="Mannhaupt G."/>
            <person name="Marck C."/>
            <person name="Martin R.P."/>
            <person name="Mewes H.-W."/>
            <person name="Michaux G."/>
            <person name="Paces V."/>
            <person name="Parle-McDermott A.G."/>
            <person name="Pearson B.M."/>
            <person name="Perrin A."/>
            <person name="Pettersson B."/>
            <person name="Poch O."/>
            <person name="Pohl T.M."/>
            <person name="Poirey R."/>
            <person name="Portetelle D."/>
            <person name="Pujol A."/>
            <person name="Purnelle B."/>
            <person name="Ramezani Rad M."/>
            <person name="Rechmann S."/>
            <person name="Schwager C."/>
            <person name="Schweizer M."/>
            <person name="Sor F."/>
            <person name="Sterky F."/>
            <person name="Tarassov I.A."/>
            <person name="Teodoru C."/>
            <person name="Tettelin H."/>
            <person name="Thierry A."/>
            <person name="Tobiasch E."/>
            <person name="Tzermia M."/>
            <person name="Uhlen M."/>
            <person name="Unseld M."/>
            <person name="Valens M."/>
            <person name="Vandenbol M."/>
            <person name="Vetter I."/>
            <person name="Vlcek C."/>
            <person name="Voet M."/>
            <person name="Volckaert G."/>
            <person name="Voss H."/>
            <person name="Wambutt R."/>
            <person name="Wedler H."/>
            <person name="Wiemann S."/>
            <person name="Winsor B."/>
            <person name="Wolfe K.H."/>
            <person name="Zollner A."/>
            <person name="Zumstein E."/>
            <person name="Kleine K."/>
        </authorList>
    </citation>
    <scope>NUCLEOTIDE SEQUENCE [LARGE SCALE GENOMIC DNA]</scope>
    <source>
        <strain>ATCC 204508 / S288c</strain>
    </source>
</reference>
<reference key="4">
    <citation type="journal article" date="2014" name="G3 (Bethesda)">
        <title>The reference genome sequence of Saccharomyces cerevisiae: Then and now.</title>
        <authorList>
            <person name="Engel S.R."/>
            <person name="Dietrich F.S."/>
            <person name="Fisk D.G."/>
            <person name="Binkley G."/>
            <person name="Balakrishnan R."/>
            <person name="Costanzo M.C."/>
            <person name="Dwight S.S."/>
            <person name="Hitz B.C."/>
            <person name="Karra K."/>
            <person name="Nash R.S."/>
            <person name="Weng S."/>
            <person name="Wong E.D."/>
            <person name="Lloyd P."/>
            <person name="Skrzypek M.S."/>
            <person name="Miyasato S.R."/>
            <person name="Simison M."/>
            <person name="Cherry J.M."/>
        </authorList>
    </citation>
    <scope>GENOME REANNOTATION</scope>
    <source>
        <strain>ATCC 204508 / S288c</strain>
    </source>
</reference>
<reference key="5">
    <citation type="journal article" date="1997" name="Mol. Cell. Biol.">
        <title>Nucleolar KKE/D repeat proteins Nop56p and Nop58p interact with Nop1p and are required for ribosome biogenesis.</title>
        <authorList>
            <person name="Gautier T."/>
            <person name="Berges T."/>
            <person name="Tollervey D."/>
            <person name="Hurt E."/>
        </authorList>
    </citation>
    <scope>FUNCTION</scope>
    <scope>INTERACTION WITH NOP1 AND SIK1</scope>
</reference>
<reference key="6">
    <citation type="journal article" date="2002" name="Mol. Cell">
        <title>Hypermethylation of the cap structure of both yeast snRNAs and snoRNAs requires a conserved methyltransferase that is localized to the nucleolus.</title>
        <authorList>
            <person name="Mouaikel J."/>
            <person name="Verheggen C."/>
            <person name="Bertrand E."/>
            <person name="Tazi J."/>
            <person name="Bordonne R."/>
        </authorList>
    </citation>
    <scope>INTERACTION WITH TGS1</scope>
</reference>
<reference key="7">
    <citation type="journal article" date="2002" name="Nature">
        <title>A large nucleolar U3 ribonucleoprotein required for 18S ribosomal RNA biogenesis.</title>
        <authorList>
            <person name="Dragon F."/>
            <person name="Gallagher J.E.G."/>
            <person name="Compagnone-Post P.A."/>
            <person name="Mitchell B.M."/>
            <person name="Porwancher K.A."/>
            <person name="Wehner K.A."/>
            <person name="Wormsley S."/>
            <person name="Settlage R.E."/>
            <person name="Shabanowitz J."/>
            <person name="Osheim Y."/>
            <person name="Beyer A.L."/>
            <person name="Hunt D.F."/>
            <person name="Baserga S.J."/>
        </authorList>
    </citation>
    <scope>IDENTIFICATION IN SSU PROCESSOME BY MASS SPECTROMETRY</scope>
</reference>
<reference key="8">
    <citation type="journal article" date="2003" name="Mol. Cell">
        <title>Assigning function to yeast proteins by integration of technologies.</title>
        <authorList>
            <person name="Hazbun T.R."/>
            <person name="Malmstroem L."/>
            <person name="Anderson S."/>
            <person name="Graczyk B.J."/>
            <person name="Fox B."/>
            <person name="Riffle M."/>
            <person name="Sundin B.A."/>
            <person name="Aranda J.D."/>
            <person name="McDonald W.H."/>
            <person name="Chiu C.-H."/>
            <person name="Snydsman B.E."/>
            <person name="Bradley P."/>
            <person name="Muller E.G.D."/>
            <person name="Fields S."/>
            <person name="Baker D."/>
            <person name="Yates J.R. III"/>
            <person name="Davis T.N."/>
        </authorList>
    </citation>
    <scope>IDENTIFICATION BY MASS SPECTROMETRY</scope>
</reference>
<reference key="9">
    <citation type="journal article" date="2003" name="Nature">
        <title>Global analysis of protein expression in yeast.</title>
        <authorList>
            <person name="Ghaemmaghami S."/>
            <person name="Huh W.-K."/>
            <person name="Bower K."/>
            <person name="Howson R.W."/>
            <person name="Belle A."/>
            <person name="Dephoure N."/>
            <person name="O'Shea E.K."/>
            <person name="Weissman J.S."/>
        </authorList>
    </citation>
    <scope>LEVEL OF PROTEIN EXPRESSION [LARGE SCALE ANALYSIS]</scope>
</reference>
<reference key="10">
    <citation type="journal article" date="2012" name="Proteomics">
        <title>Sites of ubiquitin attachment in Saccharomyces cerevisiae.</title>
        <authorList>
            <person name="Starita L.M."/>
            <person name="Lo R.S."/>
            <person name="Eng J.K."/>
            <person name="von Haller P.D."/>
            <person name="Fields S."/>
        </authorList>
    </citation>
    <scope>UBIQUITINATION [LARGE SCALE ANALYSIS] AT LYS-281</scope>
    <scope>IDENTIFICATION BY MASS SPECTROMETRY [LARGE SCALE ANALYSIS]</scope>
</reference>
<feature type="chain" id="PRO_0000219029" description="Nucleolar protein 58">
    <location>
        <begin position="1"/>
        <end position="511"/>
    </location>
</feature>
<feature type="domain" description="Nop" evidence="2">
    <location>
        <begin position="283"/>
        <end position="403"/>
    </location>
</feature>
<feature type="region of interest" description="Disordered" evidence="3">
    <location>
        <begin position="423"/>
        <end position="511"/>
    </location>
</feature>
<feature type="coiled-coil region" evidence="1">
    <location>
        <begin position="435"/>
        <end position="511"/>
    </location>
</feature>
<feature type="compositionally biased region" description="Acidic residues" evidence="3">
    <location>
        <begin position="440"/>
        <end position="450"/>
    </location>
</feature>
<feature type="compositionally biased region" description="Basic residues" evidence="3">
    <location>
        <begin position="471"/>
        <end position="511"/>
    </location>
</feature>
<feature type="cross-link" description="Glycyl lysine isopeptide (Lys-Gly) (interchain with G-Cter in ubiquitin)" evidence="10">
    <location>
        <position position="281"/>
    </location>
</feature>
<gene>
    <name type="primary">NOP58</name>
    <name type="synonym">NOP5</name>
    <name type="ordered locus">YOR310C</name>
    <name type="ORF">O6108</name>
</gene>
<comment type="function">
    <text evidence="7 8">Required for pre-18S rRNA processing. May bind microtubules.</text>
</comment>
<comment type="subunit">
    <text evidence="4 5 7">Interacts with SIK1/NOP56 and NOP1. Interacts with the trimethylguanosine synthase TGS1. Component of the ribosomal small subunit (SSU) processome composed of at least 40 protein subunits and snoRNA U3.</text>
</comment>
<comment type="interaction">
    <interactant intactId="EBI-12126">
        <id>Q12499</id>
    </interactant>
    <interactant intactId="EBI-6838">
        <id>P15646</id>
        <label>NOP1</label>
    </interactant>
    <organismsDiffer>false</organismsDiffer>
    <experiments>5</experiments>
</comment>
<comment type="interaction">
    <interactant intactId="EBI-12126">
        <id>Q12499</id>
    </interactant>
    <interactant intactId="EBI-24499">
        <id>P38768</id>
        <label>PIH1</label>
    </interactant>
    <organismsDiffer>false</organismsDiffer>
    <experiments>3</experiments>
</comment>
<comment type="interaction">
    <interactant intactId="EBI-12126">
        <id>Q12499</id>
    </interactant>
    <interactant intactId="EBI-16011">
        <id>Q05022</id>
        <label>RRP5</label>
    </interactant>
    <organismsDiffer>false</organismsDiffer>
    <experiments>5</experiments>
</comment>
<comment type="subcellular location">
    <subcellularLocation>
        <location evidence="8">Nucleus</location>
        <location evidence="8">Nucleolus</location>
    </subcellularLocation>
</comment>
<comment type="miscellaneous">
    <text evidence="6">Present with 34700 molecules/cell in log phase SD medium.</text>
</comment>
<comment type="similarity">
    <text evidence="9">Belongs to the NOP5/NOP56 family.</text>
</comment>
<name>NOP58_YEAST</name>
<dbReference type="EMBL" id="AF056070">
    <property type="protein sequence ID" value="AAC39484.1"/>
    <property type="molecule type" value="Genomic_DNA"/>
</dbReference>
<dbReference type="EMBL" id="X90565">
    <property type="protein sequence ID" value="CAA62165.1"/>
    <property type="molecule type" value="Genomic_DNA"/>
</dbReference>
<dbReference type="EMBL" id="Z75217">
    <property type="protein sequence ID" value="CAA99630.1"/>
    <property type="molecule type" value="Genomic_DNA"/>
</dbReference>
<dbReference type="EMBL" id="BK006948">
    <property type="protein sequence ID" value="DAA11075.1"/>
    <property type="molecule type" value="Genomic_DNA"/>
</dbReference>
<dbReference type="PIR" id="S58322">
    <property type="entry name" value="S58322"/>
</dbReference>
<dbReference type="RefSeq" id="NP_014955.1">
    <property type="nucleotide sequence ID" value="NM_001183730.1"/>
</dbReference>
<dbReference type="PDB" id="5WLC">
    <property type="method" value="EM"/>
    <property type="resolution" value="3.80 A"/>
    <property type="chains" value="SB=133-511"/>
</dbReference>
<dbReference type="PDB" id="5WYJ">
    <property type="method" value="EM"/>
    <property type="resolution" value="8.70 A"/>
    <property type="chains" value="3E=1-511"/>
</dbReference>
<dbReference type="PDB" id="5WYK">
    <property type="method" value="EM"/>
    <property type="resolution" value="4.50 A"/>
    <property type="chains" value="3E=1-511"/>
</dbReference>
<dbReference type="PDB" id="6KE6">
    <property type="method" value="EM"/>
    <property type="resolution" value="3.40 A"/>
    <property type="chains" value="3E=1-511"/>
</dbReference>
<dbReference type="PDB" id="6LQP">
    <property type="method" value="EM"/>
    <property type="resolution" value="3.20 A"/>
    <property type="chains" value="3E=1-511"/>
</dbReference>
<dbReference type="PDB" id="6LQQ">
    <property type="method" value="EM"/>
    <property type="resolution" value="4.10 A"/>
    <property type="chains" value="3E=1-511"/>
</dbReference>
<dbReference type="PDB" id="6LQR">
    <property type="method" value="EM"/>
    <property type="resolution" value="8.60 A"/>
    <property type="chains" value="3E=1-511"/>
</dbReference>
<dbReference type="PDB" id="6LQS">
    <property type="method" value="EM"/>
    <property type="resolution" value="3.80 A"/>
    <property type="chains" value="3E=1-511"/>
</dbReference>
<dbReference type="PDB" id="6LQT">
    <property type="method" value="EM"/>
    <property type="resolution" value="4.90 A"/>
    <property type="chains" value="3E=1-511"/>
</dbReference>
<dbReference type="PDB" id="6LQU">
    <property type="method" value="EM"/>
    <property type="resolution" value="3.70 A"/>
    <property type="chains" value="3E=1-511"/>
</dbReference>
<dbReference type="PDB" id="6LQV">
    <property type="method" value="EM"/>
    <property type="resolution" value="4.80 A"/>
    <property type="chains" value="3E=1-511"/>
</dbReference>
<dbReference type="PDB" id="6ND4">
    <property type="method" value="EM"/>
    <property type="resolution" value="4.30 A"/>
    <property type="chains" value="b=133-511"/>
</dbReference>
<dbReference type="PDB" id="6ZQA">
    <property type="method" value="EM"/>
    <property type="resolution" value="4.40 A"/>
    <property type="chains" value="CE=1-511"/>
</dbReference>
<dbReference type="PDB" id="6ZQB">
    <property type="method" value="EM"/>
    <property type="resolution" value="3.90 A"/>
    <property type="chains" value="CE=1-511"/>
</dbReference>
<dbReference type="PDB" id="6ZQC">
    <property type="method" value="EM"/>
    <property type="resolution" value="3.80 A"/>
    <property type="chains" value="CE=1-511"/>
</dbReference>
<dbReference type="PDB" id="6ZQD">
    <property type="method" value="EM"/>
    <property type="resolution" value="3.80 A"/>
    <property type="chains" value="CE=1-511"/>
</dbReference>
<dbReference type="PDB" id="6ZQE">
    <property type="method" value="EM"/>
    <property type="resolution" value="7.10 A"/>
    <property type="chains" value="CE=1-511"/>
</dbReference>
<dbReference type="PDB" id="7AJT">
    <property type="method" value="EM"/>
    <property type="resolution" value="4.60 A"/>
    <property type="chains" value="CE=1-511"/>
</dbReference>
<dbReference type="PDB" id="7AJU">
    <property type="method" value="EM"/>
    <property type="resolution" value="3.80 A"/>
    <property type="chains" value="CE=1-511"/>
</dbReference>
<dbReference type="PDB" id="7D4I">
    <property type="method" value="EM"/>
    <property type="resolution" value="4.00 A"/>
    <property type="chains" value="3E=1-511"/>
</dbReference>
<dbReference type="PDB" id="7D5S">
    <property type="method" value="EM"/>
    <property type="resolution" value="4.60 A"/>
    <property type="chains" value="3E=1-511"/>
</dbReference>
<dbReference type="PDB" id="7D5T">
    <property type="method" value="EM"/>
    <property type="resolution" value="6.00 A"/>
    <property type="chains" value="3E=1-511"/>
</dbReference>
<dbReference type="PDB" id="7D63">
    <property type="method" value="EM"/>
    <property type="resolution" value="12.30 A"/>
    <property type="chains" value="3E=1-511"/>
</dbReference>
<dbReference type="PDB" id="7SUK">
    <property type="method" value="EM"/>
    <property type="resolution" value="3.99 A"/>
    <property type="chains" value="SB=2-437"/>
</dbReference>
<dbReference type="PDBsum" id="5WLC"/>
<dbReference type="PDBsum" id="5WYJ"/>
<dbReference type="PDBsum" id="5WYK"/>
<dbReference type="PDBsum" id="6KE6"/>
<dbReference type="PDBsum" id="6LQP"/>
<dbReference type="PDBsum" id="6LQQ"/>
<dbReference type="PDBsum" id="6LQR"/>
<dbReference type="PDBsum" id="6LQS"/>
<dbReference type="PDBsum" id="6LQT"/>
<dbReference type="PDBsum" id="6LQU"/>
<dbReference type="PDBsum" id="6LQV"/>
<dbReference type="PDBsum" id="6ND4"/>
<dbReference type="PDBsum" id="6ZQA"/>
<dbReference type="PDBsum" id="6ZQB"/>
<dbReference type="PDBsum" id="6ZQC"/>
<dbReference type="PDBsum" id="6ZQD"/>
<dbReference type="PDBsum" id="6ZQE"/>
<dbReference type="PDBsum" id="7AJT"/>
<dbReference type="PDBsum" id="7AJU"/>
<dbReference type="PDBsum" id="7D4I"/>
<dbReference type="PDBsum" id="7D5S"/>
<dbReference type="PDBsum" id="7D5T"/>
<dbReference type="PDBsum" id="7D63"/>
<dbReference type="PDBsum" id="7SUK"/>
<dbReference type="EMDB" id="EMD-0949"/>
<dbReference type="EMDB" id="EMD-0950"/>
<dbReference type="EMDB" id="EMD-0951"/>
<dbReference type="EMDB" id="EMD-0952"/>
<dbReference type="EMDB" id="EMD-0953"/>
<dbReference type="EMDB" id="EMD-0954"/>
<dbReference type="EMDB" id="EMD-0955"/>
<dbReference type="EMDB" id="EMD-11357"/>
<dbReference type="EMDB" id="EMD-11358"/>
<dbReference type="EMDB" id="EMD-11359"/>
<dbReference type="EMDB" id="EMD-11360"/>
<dbReference type="EMDB" id="EMD-11361"/>
<dbReference type="EMDB" id="EMD-11807"/>
<dbReference type="EMDB" id="EMD-11808"/>
<dbReference type="EMDB" id="EMD-30574"/>
<dbReference type="EMDB" id="EMD-30584"/>
<dbReference type="EMDB" id="EMD-30585"/>
<dbReference type="EMDB" id="EMD-30588"/>
<dbReference type="EMDB" id="EMD-6695"/>
<dbReference type="EMDB" id="EMD-6696"/>
<dbReference type="EMDB" id="EMD-8859"/>
<dbReference type="EMDB" id="EMD-9964"/>
<dbReference type="SMR" id="Q12499"/>
<dbReference type="BioGRID" id="34698">
    <property type="interactions" value="368"/>
</dbReference>
<dbReference type="ComplexPortal" id="CPX-1604">
    <property type="entry name" value="Small ribosomal subunit processome"/>
</dbReference>
<dbReference type="ComplexPortal" id="CPX-729">
    <property type="entry name" value="Box C/D snoRNP complex"/>
</dbReference>
<dbReference type="DIP" id="DIP-5843N"/>
<dbReference type="FunCoup" id="Q12499">
    <property type="interactions" value="2044"/>
</dbReference>
<dbReference type="IntAct" id="Q12499">
    <property type="interactions" value="139"/>
</dbReference>
<dbReference type="MINT" id="Q12499"/>
<dbReference type="STRING" id="4932.YOR310C"/>
<dbReference type="iPTMnet" id="Q12499"/>
<dbReference type="PaxDb" id="4932-YOR310C"/>
<dbReference type="PeptideAtlas" id="Q12499"/>
<dbReference type="EnsemblFungi" id="YOR310C_mRNA">
    <property type="protein sequence ID" value="YOR310C"/>
    <property type="gene ID" value="YOR310C"/>
</dbReference>
<dbReference type="GeneID" id="854487"/>
<dbReference type="KEGG" id="sce:YOR310C"/>
<dbReference type="AGR" id="SGD:S000005837"/>
<dbReference type="SGD" id="S000005837">
    <property type="gene designation" value="NOP58"/>
</dbReference>
<dbReference type="VEuPathDB" id="FungiDB:YOR310C"/>
<dbReference type="eggNOG" id="KOG2572">
    <property type="taxonomic scope" value="Eukaryota"/>
</dbReference>
<dbReference type="GeneTree" id="ENSGT00940000153534"/>
<dbReference type="HOGENOM" id="CLU_015495_5_2_1"/>
<dbReference type="InParanoid" id="Q12499"/>
<dbReference type="OMA" id="MGMRSNW"/>
<dbReference type="OrthoDB" id="6780543at2759"/>
<dbReference type="BioCyc" id="YEAST:G3O-33793-MONOMER"/>
<dbReference type="Reactome" id="R-SCE-4570464">
    <property type="pathway name" value="SUMOylation of RNA binding proteins"/>
</dbReference>
<dbReference type="Reactome" id="R-SCE-6791226">
    <property type="pathway name" value="Major pathway of rRNA processing in the nucleolus and cytosol"/>
</dbReference>
<dbReference type="BioGRID-ORCS" id="854487">
    <property type="hits" value="8 hits in 10 CRISPR screens"/>
</dbReference>
<dbReference type="CD-CODE" id="BDAE0F88">
    <property type="entry name" value="Nucleolus"/>
</dbReference>
<dbReference type="PRO" id="PR:Q12499"/>
<dbReference type="Proteomes" id="UP000002311">
    <property type="component" value="Chromosome XV"/>
</dbReference>
<dbReference type="RNAct" id="Q12499">
    <property type="molecule type" value="protein"/>
</dbReference>
<dbReference type="GO" id="GO:0030686">
    <property type="term" value="C:90S preribosome"/>
    <property type="evidence" value="ECO:0007005"/>
    <property type="project" value="SGD"/>
</dbReference>
<dbReference type="GO" id="GO:0031428">
    <property type="term" value="C:box C/D methylation guide snoRNP complex"/>
    <property type="evidence" value="ECO:0000314"/>
    <property type="project" value="SGD"/>
</dbReference>
<dbReference type="GO" id="GO:0005730">
    <property type="term" value="C:nucleolus"/>
    <property type="evidence" value="ECO:0000314"/>
    <property type="project" value="UniProtKB"/>
</dbReference>
<dbReference type="GO" id="GO:0005654">
    <property type="term" value="C:nucleoplasm"/>
    <property type="evidence" value="ECO:0000304"/>
    <property type="project" value="Reactome"/>
</dbReference>
<dbReference type="GO" id="GO:0032040">
    <property type="term" value="C:small-subunit processome"/>
    <property type="evidence" value="ECO:0000314"/>
    <property type="project" value="SGD"/>
</dbReference>
<dbReference type="GO" id="GO:0003729">
    <property type="term" value="F:mRNA binding"/>
    <property type="evidence" value="ECO:0007005"/>
    <property type="project" value="SGD"/>
</dbReference>
<dbReference type="GO" id="GO:0030515">
    <property type="term" value="F:snoRNA binding"/>
    <property type="evidence" value="ECO:0000318"/>
    <property type="project" value="GO_Central"/>
</dbReference>
<dbReference type="GO" id="GO:0017069">
    <property type="term" value="F:snRNA binding"/>
    <property type="evidence" value="ECO:0000314"/>
    <property type="project" value="UniProtKB"/>
</dbReference>
<dbReference type="GO" id="GO:0000494">
    <property type="term" value="P:box C/D sno(s)RNA 3'-end processing"/>
    <property type="evidence" value="ECO:0000314"/>
    <property type="project" value="ComplexPortal"/>
</dbReference>
<dbReference type="GO" id="GO:0000480">
    <property type="term" value="P:endonucleolytic cleavage in 5'-ETS of tricistronic rRNA transcript (SSU-rRNA, 5.8S rRNA, LSU-rRNA)"/>
    <property type="evidence" value="ECO:0000315"/>
    <property type="project" value="SGD"/>
</dbReference>
<dbReference type="GO" id="GO:0000447">
    <property type="term" value="P:endonucleolytic cleavage in ITS1 to separate SSU-rRNA from 5.8S rRNA and LSU-rRNA from tricistronic rRNA transcript (SSU-rRNA, 5.8S rRNA, LSU-rRNA)"/>
    <property type="evidence" value="ECO:0000315"/>
    <property type="project" value="SGD"/>
</dbReference>
<dbReference type="GO" id="GO:0000472">
    <property type="term" value="P:endonucleolytic cleavage to generate mature 5'-end of SSU-rRNA from (SSU-rRNA, 5.8S rRNA, LSU-rRNA)"/>
    <property type="evidence" value="ECO:0000315"/>
    <property type="project" value="SGD"/>
</dbReference>
<dbReference type="GO" id="GO:0030490">
    <property type="term" value="P:maturation of SSU-rRNA"/>
    <property type="evidence" value="ECO:0000303"/>
    <property type="project" value="ComplexPortal"/>
</dbReference>
<dbReference type="GO" id="GO:1902570">
    <property type="term" value="P:protein localization to nucleolus"/>
    <property type="evidence" value="ECO:0000315"/>
    <property type="project" value="UniProtKB"/>
</dbReference>
<dbReference type="GO" id="GO:0006364">
    <property type="term" value="P:rRNA processing"/>
    <property type="evidence" value="ECO:0000314"/>
    <property type="project" value="UniProtKB"/>
</dbReference>
<dbReference type="GO" id="GO:0000452">
    <property type="term" value="P:snoRNA guided rRNA 2'-O-methylation"/>
    <property type="evidence" value="ECO:0000314"/>
    <property type="project" value="ComplexPortal"/>
</dbReference>
<dbReference type="FunFam" id="1.10.246.90:FF:000003">
    <property type="entry name" value="Nucleolar protein 58"/>
    <property type="match status" value="1"/>
</dbReference>
<dbReference type="FunFam" id="1.10.287.4070:FF:000001">
    <property type="entry name" value="Probable Nucleolar protein 58"/>
    <property type="match status" value="1"/>
</dbReference>
<dbReference type="Gene3D" id="1.10.287.4070">
    <property type="match status" value="1"/>
</dbReference>
<dbReference type="Gene3D" id="1.10.246.90">
    <property type="entry name" value="Nop domain"/>
    <property type="match status" value="1"/>
</dbReference>
<dbReference type="InterPro" id="IPR045056">
    <property type="entry name" value="Nop56/Nop58"/>
</dbReference>
<dbReference type="InterPro" id="IPR012974">
    <property type="entry name" value="NOP58/56_N"/>
</dbReference>
<dbReference type="InterPro" id="IPR042239">
    <property type="entry name" value="Nop_C"/>
</dbReference>
<dbReference type="InterPro" id="IPR002687">
    <property type="entry name" value="Nop_dom"/>
</dbReference>
<dbReference type="InterPro" id="IPR036070">
    <property type="entry name" value="Nop_dom_sf"/>
</dbReference>
<dbReference type="InterPro" id="IPR012976">
    <property type="entry name" value="NOSIC"/>
</dbReference>
<dbReference type="PANTHER" id="PTHR10894">
    <property type="entry name" value="NUCLEOLAR PROTEIN 5 NUCLEOLAR PROTEIN NOP5 NOP58"/>
    <property type="match status" value="1"/>
</dbReference>
<dbReference type="PANTHER" id="PTHR10894:SF1">
    <property type="entry name" value="NUCLEOLAR PROTEIN 58"/>
    <property type="match status" value="1"/>
</dbReference>
<dbReference type="Pfam" id="PF01798">
    <property type="entry name" value="Nop"/>
    <property type="match status" value="1"/>
</dbReference>
<dbReference type="Pfam" id="PF08156">
    <property type="entry name" value="NOP5NT"/>
    <property type="match status" value="1"/>
</dbReference>
<dbReference type="SMART" id="SM00931">
    <property type="entry name" value="NOSIC"/>
    <property type="match status" value="1"/>
</dbReference>
<dbReference type="SUPFAM" id="SSF89124">
    <property type="entry name" value="Nop domain"/>
    <property type="match status" value="1"/>
</dbReference>
<dbReference type="PROSITE" id="PS51358">
    <property type="entry name" value="NOP"/>
    <property type="match status" value="1"/>
</dbReference>
<keyword id="KW-0002">3D-structure</keyword>
<keyword id="KW-0175">Coiled coil</keyword>
<keyword id="KW-1017">Isopeptide bond</keyword>
<keyword id="KW-0539">Nucleus</keyword>
<keyword id="KW-1185">Reference proteome</keyword>
<keyword id="KW-0687">Ribonucleoprotein</keyword>
<keyword id="KW-0690">Ribosome biogenesis</keyword>
<keyword id="KW-0698">rRNA processing</keyword>
<keyword id="KW-0832">Ubl conjugation</keyword>
<sequence>MAYVLTETSAGYALLKASDKKIYKSSSLIQDLDSSDKVLKEFKIAAFSKFNSAANALEEANSIIEGKVSSQLEKLLEEIKKDKKSTLIVSETKLANAINKLGLNFNVVSDAVTLDIYRAIKEYLPELLPGMSDNDLSKMSLGLAHSIGRHKLKFSADKVDVMIIQAIALLDDLDKELNTYAMRCKEWYGWHFPELAKIVTDSVAYARIILTMGIRSKASETDLSEILPEEIEERVKTAAEVSMGTEITQTDLDNINALAEQIVEFAAYREQLSNYLSARMKAIAPNLTQLVGELVGARLIAHSGSLISLAKSPASTIQILGAEKALFRALKTKHDTPKYGLLYHASLVGQATGKNKGKIARVLAAKAAVSLRYDALAEDRDDSGDIGLESRAKVENRLSQLEGRDLRTTPKVVREAKKVEMTEARAYNADADTAKAASDSESDSDDEEEEKKEKKEKKRKRDDDEDSKDSKKAKKEKKDKKEKKEKKEKKEKKEKKEKKEKKSKKEKKEKK</sequence>
<organism>
    <name type="scientific">Saccharomyces cerevisiae (strain ATCC 204508 / S288c)</name>
    <name type="common">Baker's yeast</name>
    <dbReference type="NCBI Taxonomy" id="559292"/>
    <lineage>
        <taxon>Eukaryota</taxon>
        <taxon>Fungi</taxon>
        <taxon>Dikarya</taxon>
        <taxon>Ascomycota</taxon>
        <taxon>Saccharomycotina</taxon>
        <taxon>Saccharomycetes</taxon>
        <taxon>Saccharomycetales</taxon>
        <taxon>Saccharomycetaceae</taxon>
        <taxon>Saccharomyces</taxon>
    </lineage>
</organism>
<evidence type="ECO:0000255" key="1"/>
<evidence type="ECO:0000255" key="2">
    <source>
        <dbReference type="PROSITE-ProRule" id="PRU00690"/>
    </source>
</evidence>
<evidence type="ECO:0000256" key="3">
    <source>
        <dbReference type="SAM" id="MobiDB-lite"/>
    </source>
</evidence>
<evidence type="ECO:0000269" key="4">
    <source>
    </source>
</evidence>
<evidence type="ECO:0000269" key="5">
    <source>
    </source>
</evidence>
<evidence type="ECO:0000269" key="6">
    <source>
    </source>
</evidence>
<evidence type="ECO:0000269" key="7">
    <source>
    </source>
</evidence>
<evidence type="ECO:0000269" key="8">
    <source>
    </source>
</evidence>
<evidence type="ECO:0000305" key="9"/>
<evidence type="ECO:0007744" key="10">
    <source>
    </source>
</evidence>
<protein>
    <recommendedName>
        <fullName>Nucleolar protein 58</fullName>
    </recommendedName>
    <alternativeName>
        <fullName>Nucleolar protein 5</fullName>
    </alternativeName>
</protein>
<accession>Q12499</accession>
<accession>D6W309</accession>